<keyword id="KW-0963">Cytoplasm</keyword>
<keyword id="KW-0489">Methyltransferase</keyword>
<keyword id="KW-1185">Reference proteome</keyword>
<keyword id="KW-0949">S-adenosyl-L-methionine</keyword>
<keyword id="KW-0808">Transferase</keyword>
<name>PRMA_METFK</name>
<organism>
    <name type="scientific">Methylobacillus flagellatus (strain ATCC 51484 / DSM 6875 / VKM B-1610 / KT)</name>
    <dbReference type="NCBI Taxonomy" id="265072"/>
    <lineage>
        <taxon>Bacteria</taxon>
        <taxon>Pseudomonadati</taxon>
        <taxon>Pseudomonadota</taxon>
        <taxon>Betaproteobacteria</taxon>
        <taxon>Nitrosomonadales</taxon>
        <taxon>Methylophilaceae</taxon>
        <taxon>Methylobacillus</taxon>
    </lineage>
</organism>
<evidence type="ECO:0000255" key="1">
    <source>
        <dbReference type="HAMAP-Rule" id="MF_00735"/>
    </source>
</evidence>
<reference key="1">
    <citation type="submission" date="2006-03" db="EMBL/GenBank/DDBJ databases">
        <title>Complete sequence of Methylobacillus flagellatus KT.</title>
        <authorList>
            <consortium name="US DOE Joint Genome Institute"/>
            <person name="Copeland A."/>
            <person name="Lucas S."/>
            <person name="Lapidus A."/>
            <person name="Barry K."/>
            <person name="Detter J.C."/>
            <person name="Glavina del Rio T."/>
            <person name="Hammon N."/>
            <person name="Israni S."/>
            <person name="Dalin E."/>
            <person name="Tice H."/>
            <person name="Pitluck S."/>
            <person name="Brettin T."/>
            <person name="Bruce D."/>
            <person name="Han C."/>
            <person name="Tapia R."/>
            <person name="Saunders E."/>
            <person name="Gilna P."/>
            <person name="Schmutz J."/>
            <person name="Larimer F."/>
            <person name="Land M."/>
            <person name="Kyrpides N."/>
            <person name="Anderson I."/>
            <person name="Richardson P."/>
        </authorList>
    </citation>
    <scope>NUCLEOTIDE SEQUENCE [LARGE SCALE GENOMIC DNA]</scope>
    <source>
        <strain>ATCC 51484 / DSM 6875 / VKM B-1610 / KT</strain>
    </source>
</reference>
<sequence>MAWISLRIDARDDNAELLSDTLMELGALSASIEDANAETPDEQPIFGEPGDPPPGIWQQNVVTALLDESADLDSLLEELSAATGITDFRYSTETIAEQDWVRATQSQFEPIRIRDDLWIVPSWHDAPNPDGLNIVLDPGLAFGTGSHPTTHLCLSWLADTVKPDTSVLDYGCGSGILAIAARKLGAGKVVGVDIDAQAIQSSVYNADQNQVDASFYLASDLPGGQFDIVVANILSSALSVLAPALARAARSGGRIALSGILREQADQVSAIYQEWFEMDAPVFMDSWVLLTGSRR</sequence>
<proteinExistence type="inferred from homology"/>
<comment type="function">
    <text evidence="1">Methylates ribosomal protein L11.</text>
</comment>
<comment type="catalytic activity">
    <reaction evidence="1">
        <text>L-lysyl-[protein] + 3 S-adenosyl-L-methionine = N(6),N(6),N(6)-trimethyl-L-lysyl-[protein] + 3 S-adenosyl-L-homocysteine + 3 H(+)</text>
        <dbReference type="Rhea" id="RHEA:54192"/>
        <dbReference type="Rhea" id="RHEA-COMP:9752"/>
        <dbReference type="Rhea" id="RHEA-COMP:13826"/>
        <dbReference type="ChEBI" id="CHEBI:15378"/>
        <dbReference type="ChEBI" id="CHEBI:29969"/>
        <dbReference type="ChEBI" id="CHEBI:57856"/>
        <dbReference type="ChEBI" id="CHEBI:59789"/>
        <dbReference type="ChEBI" id="CHEBI:61961"/>
    </reaction>
</comment>
<comment type="subcellular location">
    <subcellularLocation>
        <location evidence="1">Cytoplasm</location>
    </subcellularLocation>
</comment>
<comment type="similarity">
    <text evidence="1">Belongs to the methyltransferase superfamily. PrmA family.</text>
</comment>
<accession>Q1GX86</accession>
<gene>
    <name evidence="1" type="primary">prmA</name>
    <name type="ordered locus">Mfla_0023</name>
</gene>
<protein>
    <recommendedName>
        <fullName evidence="1">Ribosomal protein L11 methyltransferase</fullName>
        <shortName evidence="1">L11 Mtase</shortName>
        <ecNumber evidence="1">2.1.1.-</ecNumber>
    </recommendedName>
</protein>
<dbReference type="EC" id="2.1.1.-" evidence="1"/>
<dbReference type="EMBL" id="CP000284">
    <property type="protein sequence ID" value="ABE48294.1"/>
    <property type="molecule type" value="Genomic_DNA"/>
</dbReference>
<dbReference type="RefSeq" id="WP_011478391.1">
    <property type="nucleotide sequence ID" value="NC_007947.1"/>
</dbReference>
<dbReference type="SMR" id="Q1GX86"/>
<dbReference type="STRING" id="265072.Mfla_0023"/>
<dbReference type="KEGG" id="mfa:Mfla_0023"/>
<dbReference type="eggNOG" id="COG2264">
    <property type="taxonomic scope" value="Bacteria"/>
</dbReference>
<dbReference type="HOGENOM" id="CLU_049382_4_1_4"/>
<dbReference type="OrthoDB" id="9785995at2"/>
<dbReference type="Proteomes" id="UP000002440">
    <property type="component" value="Chromosome"/>
</dbReference>
<dbReference type="GO" id="GO:0005829">
    <property type="term" value="C:cytosol"/>
    <property type="evidence" value="ECO:0007669"/>
    <property type="project" value="TreeGrafter"/>
</dbReference>
<dbReference type="GO" id="GO:0016279">
    <property type="term" value="F:protein-lysine N-methyltransferase activity"/>
    <property type="evidence" value="ECO:0007669"/>
    <property type="project" value="TreeGrafter"/>
</dbReference>
<dbReference type="GO" id="GO:0032259">
    <property type="term" value="P:methylation"/>
    <property type="evidence" value="ECO:0007669"/>
    <property type="project" value="UniProtKB-KW"/>
</dbReference>
<dbReference type="CDD" id="cd02440">
    <property type="entry name" value="AdoMet_MTases"/>
    <property type="match status" value="1"/>
</dbReference>
<dbReference type="Gene3D" id="3.40.50.150">
    <property type="entry name" value="Vaccinia Virus protein VP39"/>
    <property type="match status" value="1"/>
</dbReference>
<dbReference type="HAMAP" id="MF_00735">
    <property type="entry name" value="Methyltr_PrmA"/>
    <property type="match status" value="1"/>
</dbReference>
<dbReference type="InterPro" id="IPR050078">
    <property type="entry name" value="Ribosomal_L11_MeTrfase_PrmA"/>
</dbReference>
<dbReference type="InterPro" id="IPR004498">
    <property type="entry name" value="Ribosomal_PrmA_MeTrfase"/>
</dbReference>
<dbReference type="InterPro" id="IPR029063">
    <property type="entry name" value="SAM-dependent_MTases_sf"/>
</dbReference>
<dbReference type="NCBIfam" id="TIGR00406">
    <property type="entry name" value="prmA"/>
    <property type="match status" value="1"/>
</dbReference>
<dbReference type="PANTHER" id="PTHR43648">
    <property type="entry name" value="ELECTRON TRANSFER FLAVOPROTEIN BETA SUBUNIT LYSINE METHYLTRANSFERASE"/>
    <property type="match status" value="1"/>
</dbReference>
<dbReference type="PANTHER" id="PTHR43648:SF1">
    <property type="entry name" value="ELECTRON TRANSFER FLAVOPROTEIN BETA SUBUNIT LYSINE METHYLTRANSFERASE"/>
    <property type="match status" value="1"/>
</dbReference>
<dbReference type="Pfam" id="PF06325">
    <property type="entry name" value="PrmA"/>
    <property type="match status" value="1"/>
</dbReference>
<dbReference type="PIRSF" id="PIRSF000401">
    <property type="entry name" value="RPL11_MTase"/>
    <property type="match status" value="1"/>
</dbReference>
<dbReference type="SUPFAM" id="SSF53335">
    <property type="entry name" value="S-adenosyl-L-methionine-dependent methyltransferases"/>
    <property type="match status" value="1"/>
</dbReference>
<feature type="chain" id="PRO_1000046047" description="Ribosomal protein L11 methyltransferase">
    <location>
        <begin position="1"/>
        <end position="295"/>
    </location>
</feature>
<feature type="binding site" evidence="1">
    <location>
        <position position="150"/>
    </location>
    <ligand>
        <name>S-adenosyl-L-methionine</name>
        <dbReference type="ChEBI" id="CHEBI:59789"/>
    </ligand>
</feature>
<feature type="binding site" evidence="1">
    <location>
        <position position="171"/>
    </location>
    <ligand>
        <name>S-adenosyl-L-methionine</name>
        <dbReference type="ChEBI" id="CHEBI:59789"/>
    </ligand>
</feature>
<feature type="binding site" evidence="1">
    <location>
        <position position="193"/>
    </location>
    <ligand>
        <name>S-adenosyl-L-methionine</name>
        <dbReference type="ChEBI" id="CHEBI:59789"/>
    </ligand>
</feature>
<feature type="binding site" evidence="1">
    <location>
        <position position="232"/>
    </location>
    <ligand>
        <name>S-adenosyl-L-methionine</name>
        <dbReference type="ChEBI" id="CHEBI:59789"/>
    </ligand>
</feature>